<comment type="subcellular location">
    <subcellularLocation>
        <location evidence="1">Cell membrane</location>
        <topology evidence="1">Multi-pass membrane protein</topology>
    </subcellularLocation>
</comment>
<comment type="similarity">
    <text evidence="1">Belongs to the AaeX family.</text>
</comment>
<keyword id="KW-1003">Cell membrane</keyword>
<keyword id="KW-0472">Membrane</keyword>
<keyword id="KW-0812">Transmembrane</keyword>
<keyword id="KW-1133">Transmembrane helix</keyword>
<organism>
    <name type="scientific">Yersinia pestis (strain Pestoides F)</name>
    <dbReference type="NCBI Taxonomy" id="386656"/>
    <lineage>
        <taxon>Bacteria</taxon>
        <taxon>Pseudomonadati</taxon>
        <taxon>Pseudomonadota</taxon>
        <taxon>Gammaproteobacteria</taxon>
        <taxon>Enterobacterales</taxon>
        <taxon>Yersiniaceae</taxon>
        <taxon>Yersinia</taxon>
    </lineage>
</organism>
<reference key="1">
    <citation type="submission" date="2007-02" db="EMBL/GenBank/DDBJ databases">
        <title>Complete sequence of chromosome of Yersinia pestis Pestoides F.</title>
        <authorList>
            <consortium name="US DOE Joint Genome Institute"/>
            <person name="Copeland A."/>
            <person name="Lucas S."/>
            <person name="Lapidus A."/>
            <person name="Barry K."/>
            <person name="Detter J.C."/>
            <person name="Glavina del Rio T."/>
            <person name="Hammon N."/>
            <person name="Israni S."/>
            <person name="Dalin E."/>
            <person name="Tice H."/>
            <person name="Pitluck S."/>
            <person name="Di Bartolo G."/>
            <person name="Chain P."/>
            <person name="Malfatti S."/>
            <person name="Shin M."/>
            <person name="Vergez L."/>
            <person name="Schmutz J."/>
            <person name="Larimer F."/>
            <person name="Land M."/>
            <person name="Hauser L."/>
            <person name="Worsham P."/>
            <person name="Chu M."/>
            <person name="Bearden S."/>
            <person name="Garcia E."/>
            <person name="Richardson P."/>
        </authorList>
    </citation>
    <scope>NUCLEOTIDE SEQUENCE [LARGE SCALE GENOMIC DNA]</scope>
    <source>
        <strain>Pestoides F</strain>
    </source>
</reference>
<protein>
    <recommendedName>
        <fullName evidence="1">Protein AaeX</fullName>
    </recommendedName>
</protein>
<evidence type="ECO:0000255" key="1">
    <source>
        <dbReference type="HAMAP-Rule" id="MF_01546"/>
    </source>
</evidence>
<feature type="chain" id="PRO_0000300584" description="Protein AaeX">
    <location>
        <begin position="1"/>
        <end position="67"/>
    </location>
</feature>
<feature type="transmembrane region" description="Helical" evidence="1">
    <location>
        <begin position="3"/>
        <end position="23"/>
    </location>
</feature>
<feature type="transmembrane region" description="Helical" evidence="1">
    <location>
        <begin position="39"/>
        <end position="59"/>
    </location>
</feature>
<accession>A4THE8</accession>
<sequence>MSLLPVMVIFGLSFPPIFLELLISLALFFVVRRILQPTGIYEFVWHPALFNTALYCCLFYLTSRLFS</sequence>
<proteinExistence type="inferred from homology"/>
<dbReference type="EMBL" id="CP000668">
    <property type="protein sequence ID" value="ABP38710.1"/>
    <property type="molecule type" value="Genomic_DNA"/>
</dbReference>
<dbReference type="RefSeq" id="WP_002210093.1">
    <property type="nucleotide sequence ID" value="NZ_CP009715.1"/>
</dbReference>
<dbReference type="GeneID" id="57975109"/>
<dbReference type="KEGG" id="ypp:YPDSF_0291"/>
<dbReference type="PATRIC" id="fig|386656.14.peg.1590"/>
<dbReference type="GO" id="GO:0005886">
    <property type="term" value="C:plasma membrane"/>
    <property type="evidence" value="ECO:0007669"/>
    <property type="project" value="UniProtKB-SubCell"/>
</dbReference>
<dbReference type="HAMAP" id="MF_01546">
    <property type="entry name" value="AaeX"/>
    <property type="match status" value="1"/>
</dbReference>
<dbReference type="InterPro" id="IPR012451">
    <property type="entry name" value="DUF1656"/>
</dbReference>
<dbReference type="NCBIfam" id="NF008615">
    <property type="entry name" value="PRK11594.1"/>
    <property type="match status" value="1"/>
</dbReference>
<dbReference type="Pfam" id="PF07869">
    <property type="entry name" value="DUF1656"/>
    <property type="match status" value="1"/>
</dbReference>
<name>AAEX_YERPP</name>
<gene>
    <name evidence="1" type="primary">aaeX</name>
    <name type="ordered locus">YPDSF_0291</name>
</gene>